<accession>Q5L405</accession>
<keyword id="KW-0240">DNA-directed RNA polymerase</keyword>
<keyword id="KW-0548">Nucleotidyltransferase</keyword>
<keyword id="KW-1185">Reference proteome</keyword>
<keyword id="KW-0804">Transcription</keyword>
<keyword id="KW-0808">Transferase</keyword>
<reference key="1">
    <citation type="journal article" date="2004" name="Nucleic Acids Res.">
        <title>Thermoadaptation trait revealed by the genome sequence of thermophilic Geobacillus kaustophilus.</title>
        <authorList>
            <person name="Takami H."/>
            <person name="Takaki Y."/>
            <person name="Chee G.-J."/>
            <person name="Nishi S."/>
            <person name="Shimamura S."/>
            <person name="Suzuki H."/>
            <person name="Matsui S."/>
            <person name="Uchiyama I."/>
        </authorList>
    </citation>
    <scope>NUCLEOTIDE SEQUENCE [LARGE SCALE GENOMIC DNA]</scope>
    <source>
        <strain>HTA426</strain>
    </source>
</reference>
<protein>
    <recommendedName>
        <fullName evidence="1">DNA-directed RNA polymerase subunit beta</fullName>
        <shortName evidence="1">RNAP subunit beta</shortName>
        <ecNumber evidence="1">2.7.7.6</ecNumber>
    </recommendedName>
    <alternativeName>
        <fullName evidence="1">RNA polymerase subunit beta</fullName>
    </alternativeName>
    <alternativeName>
        <fullName evidence="1">Transcriptase subunit beta</fullName>
    </alternativeName>
</protein>
<dbReference type="EC" id="2.7.7.6" evidence="1"/>
<dbReference type="EMBL" id="BA000043">
    <property type="protein sequence ID" value="BAD74383.1"/>
    <property type="molecule type" value="Genomic_DNA"/>
</dbReference>
<dbReference type="RefSeq" id="WP_011229613.1">
    <property type="nucleotide sequence ID" value="NC_006510.1"/>
</dbReference>
<dbReference type="SMR" id="Q5L405"/>
<dbReference type="STRING" id="235909.GK0098"/>
<dbReference type="GeneID" id="32062086"/>
<dbReference type="KEGG" id="gka:GK0098"/>
<dbReference type="eggNOG" id="COG0085">
    <property type="taxonomic scope" value="Bacteria"/>
</dbReference>
<dbReference type="HOGENOM" id="CLU_000524_4_1_9"/>
<dbReference type="Proteomes" id="UP000001172">
    <property type="component" value="Chromosome"/>
</dbReference>
<dbReference type="GO" id="GO:0000428">
    <property type="term" value="C:DNA-directed RNA polymerase complex"/>
    <property type="evidence" value="ECO:0007669"/>
    <property type="project" value="UniProtKB-KW"/>
</dbReference>
<dbReference type="GO" id="GO:0003677">
    <property type="term" value="F:DNA binding"/>
    <property type="evidence" value="ECO:0007669"/>
    <property type="project" value="UniProtKB-UniRule"/>
</dbReference>
<dbReference type="GO" id="GO:0003899">
    <property type="term" value="F:DNA-directed RNA polymerase activity"/>
    <property type="evidence" value="ECO:0007669"/>
    <property type="project" value="UniProtKB-UniRule"/>
</dbReference>
<dbReference type="GO" id="GO:0032549">
    <property type="term" value="F:ribonucleoside binding"/>
    <property type="evidence" value="ECO:0007669"/>
    <property type="project" value="InterPro"/>
</dbReference>
<dbReference type="GO" id="GO:0006351">
    <property type="term" value="P:DNA-templated transcription"/>
    <property type="evidence" value="ECO:0007669"/>
    <property type="project" value="UniProtKB-UniRule"/>
</dbReference>
<dbReference type="CDD" id="cd00653">
    <property type="entry name" value="RNA_pol_B_RPB2"/>
    <property type="match status" value="1"/>
</dbReference>
<dbReference type="FunFam" id="3.90.1800.10:FF:000001">
    <property type="entry name" value="DNA-directed RNA polymerase subunit beta"/>
    <property type="match status" value="1"/>
</dbReference>
<dbReference type="Gene3D" id="2.40.50.100">
    <property type="match status" value="1"/>
</dbReference>
<dbReference type="Gene3D" id="2.40.50.150">
    <property type="match status" value="1"/>
</dbReference>
<dbReference type="Gene3D" id="3.90.1100.10">
    <property type="match status" value="2"/>
</dbReference>
<dbReference type="Gene3D" id="2.30.150.10">
    <property type="entry name" value="DNA-directed RNA polymerase, beta subunit, external 1 domain"/>
    <property type="match status" value="1"/>
</dbReference>
<dbReference type="Gene3D" id="2.40.270.10">
    <property type="entry name" value="DNA-directed RNA polymerase, subunit 2, domain 6"/>
    <property type="match status" value="1"/>
</dbReference>
<dbReference type="Gene3D" id="3.90.1800.10">
    <property type="entry name" value="RNA polymerase alpha subunit dimerisation domain"/>
    <property type="match status" value="1"/>
</dbReference>
<dbReference type="Gene3D" id="3.90.1110.10">
    <property type="entry name" value="RNA polymerase Rpb2, domain 2"/>
    <property type="match status" value="1"/>
</dbReference>
<dbReference type="HAMAP" id="MF_01321">
    <property type="entry name" value="RNApol_bact_RpoB"/>
    <property type="match status" value="1"/>
</dbReference>
<dbReference type="InterPro" id="IPR042107">
    <property type="entry name" value="DNA-dir_RNA_pol_bsu_ext_1_sf"/>
</dbReference>
<dbReference type="InterPro" id="IPR019462">
    <property type="entry name" value="DNA-dir_RNA_pol_bsu_external_1"/>
</dbReference>
<dbReference type="InterPro" id="IPR015712">
    <property type="entry name" value="DNA-dir_RNA_pol_su2"/>
</dbReference>
<dbReference type="InterPro" id="IPR007120">
    <property type="entry name" value="DNA-dir_RNAP_su2_dom"/>
</dbReference>
<dbReference type="InterPro" id="IPR037033">
    <property type="entry name" value="DNA-dir_RNAP_su2_hyb_sf"/>
</dbReference>
<dbReference type="InterPro" id="IPR010243">
    <property type="entry name" value="RNA_pol_bsu_bac"/>
</dbReference>
<dbReference type="InterPro" id="IPR007121">
    <property type="entry name" value="RNA_pol_bsu_CS"/>
</dbReference>
<dbReference type="InterPro" id="IPR007644">
    <property type="entry name" value="RNA_pol_bsu_protrusion"/>
</dbReference>
<dbReference type="InterPro" id="IPR007642">
    <property type="entry name" value="RNA_pol_Rpb2_2"/>
</dbReference>
<dbReference type="InterPro" id="IPR037034">
    <property type="entry name" value="RNA_pol_Rpb2_2_sf"/>
</dbReference>
<dbReference type="InterPro" id="IPR007645">
    <property type="entry name" value="RNA_pol_Rpb2_3"/>
</dbReference>
<dbReference type="InterPro" id="IPR007641">
    <property type="entry name" value="RNA_pol_Rpb2_7"/>
</dbReference>
<dbReference type="InterPro" id="IPR014724">
    <property type="entry name" value="RNA_pol_RPB2_OB-fold"/>
</dbReference>
<dbReference type="NCBIfam" id="NF001616">
    <property type="entry name" value="PRK00405.1"/>
    <property type="match status" value="1"/>
</dbReference>
<dbReference type="NCBIfam" id="TIGR02013">
    <property type="entry name" value="rpoB"/>
    <property type="match status" value="1"/>
</dbReference>
<dbReference type="PANTHER" id="PTHR20856">
    <property type="entry name" value="DNA-DIRECTED RNA POLYMERASE I SUBUNIT 2"/>
    <property type="match status" value="1"/>
</dbReference>
<dbReference type="Pfam" id="PF04563">
    <property type="entry name" value="RNA_pol_Rpb2_1"/>
    <property type="match status" value="1"/>
</dbReference>
<dbReference type="Pfam" id="PF04561">
    <property type="entry name" value="RNA_pol_Rpb2_2"/>
    <property type="match status" value="2"/>
</dbReference>
<dbReference type="Pfam" id="PF04565">
    <property type="entry name" value="RNA_pol_Rpb2_3"/>
    <property type="match status" value="1"/>
</dbReference>
<dbReference type="Pfam" id="PF10385">
    <property type="entry name" value="RNA_pol_Rpb2_45"/>
    <property type="match status" value="1"/>
</dbReference>
<dbReference type="Pfam" id="PF00562">
    <property type="entry name" value="RNA_pol_Rpb2_6"/>
    <property type="match status" value="1"/>
</dbReference>
<dbReference type="Pfam" id="PF04560">
    <property type="entry name" value="RNA_pol_Rpb2_7"/>
    <property type="match status" value="1"/>
</dbReference>
<dbReference type="SUPFAM" id="SSF64484">
    <property type="entry name" value="beta and beta-prime subunits of DNA dependent RNA-polymerase"/>
    <property type="match status" value="1"/>
</dbReference>
<dbReference type="PROSITE" id="PS01166">
    <property type="entry name" value="RNA_POL_BETA"/>
    <property type="match status" value="1"/>
</dbReference>
<feature type="chain" id="PRO_0000224059" description="DNA-directed RNA polymerase subunit beta">
    <location>
        <begin position="1"/>
        <end position="1190"/>
    </location>
</feature>
<feature type="region of interest" description="Disordered" evidence="2">
    <location>
        <begin position="1155"/>
        <end position="1190"/>
    </location>
</feature>
<feature type="compositionally biased region" description="Basic and acidic residues" evidence="2">
    <location>
        <begin position="1173"/>
        <end position="1190"/>
    </location>
</feature>
<organism>
    <name type="scientific">Geobacillus kaustophilus (strain HTA426)</name>
    <dbReference type="NCBI Taxonomy" id="235909"/>
    <lineage>
        <taxon>Bacteria</taxon>
        <taxon>Bacillati</taxon>
        <taxon>Bacillota</taxon>
        <taxon>Bacilli</taxon>
        <taxon>Bacillales</taxon>
        <taxon>Anoxybacillaceae</taxon>
        <taxon>Geobacillus</taxon>
        <taxon>Geobacillus thermoleovorans group</taxon>
    </lineage>
</organism>
<sequence>MTGRLVQYGRHRQRRSYARISEVLELPNLIEIQTSSYQWFLDEGLREMFREISPIEDFSGNLSLEFIDYSLGEPKYTVEEAKERDVTYAAPLRVKVRLINKETGEVKEQDVFMGDFPLMTETGTFIINGAERVIVSQLVRSPSVYYSDKVDKNGKRGYSATVIPNRGAWLEYETDAKDVVYVRIDRTRKLPVTVLLRALGFSSDQEIIDLLGDNEYLRNTLEKDNTDSTEKALIEIYERLRPGEPPTLENAKNLLASRFFDPKRYDLASVGRYKINKKLHIKNRLFNQRLAETIIDPETKEVIAEAGAMIDRRTLNRLLPYLEKGVGLQTYRPAEGVVDGDISVQTIKIYAPNDPDGEKVINVIGNGFIAEDVKHITPADIIASISYFFNLLHGVGDTDDIDHLGNRRLRSVGELLQNQFRIGLSRMERVVRERMSIQDTNTITPQQLINIRPVIAAIKEFFGSSQLSQFMDQTNPLAELTHKRRLSALGPGGLTRERAGFEVRDVHYSHYGRMCPIETPEGPNIGLINSLSTYAKVNKFGFIETPYRRVDPETGRVTDQIDYLTADEEDNYVVAQANVPLAEDGTFLEENVVARFRGENIVVKRDRVDYMDVSPKQVVSAATACIPFLENDDSNRALMGANMQRQAVPLLEPEAPIVGTGMEYVSAKDSGAAVICKHRGIVERVEAKEIWVRRLIEVDGKEVKGDLDKYRLLKFVRSNQGTCYNQRPIVKKGDIVEKGEILADGPSMDKGELALGRNVLVAFMTWDGYNYEDAIIMSERLVKEDVYTSIHIEEYEAESRDTKLGPEEITRDIPNVGEDALKNLDERGIVRIGAEVKDGDLLVGKVTPKGMTELTAEERLLHAIFGEKAREVRDTSLRVPHGGGGIVLDVKVFNREDGDELPPGVNQLVRVYIVQKRKISEGDKMAGRHGNKGVISRILPEEDMPFLPDGTPIDIMLNPLGVPSRMNIGQVFELHLGMAAKKLGLHIASPVFDGATEEDVWNILEEAGLARDAKTVLYDGRTGEPFDNRVSVGIMYMIKLAHMVDDKLHARSTGPYSLVTQQPLGGKAQFGGQRFGEMEVWALEAYGAAYTLQEILTVKSDDVVGRVKTYEAIVKGENIPEPGVPESFKVLIKELQSLGMDVTILTSDEQEVNMENFDDDDDHAPDAIMVDVKPAEREEAGEEKDAVTKE</sequence>
<proteinExistence type="inferred from homology"/>
<comment type="function">
    <text evidence="1">DNA-dependent RNA polymerase catalyzes the transcription of DNA into RNA using the four ribonucleoside triphosphates as substrates.</text>
</comment>
<comment type="catalytic activity">
    <reaction evidence="1">
        <text>RNA(n) + a ribonucleoside 5'-triphosphate = RNA(n+1) + diphosphate</text>
        <dbReference type="Rhea" id="RHEA:21248"/>
        <dbReference type="Rhea" id="RHEA-COMP:14527"/>
        <dbReference type="Rhea" id="RHEA-COMP:17342"/>
        <dbReference type="ChEBI" id="CHEBI:33019"/>
        <dbReference type="ChEBI" id="CHEBI:61557"/>
        <dbReference type="ChEBI" id="CHEBI:140395"/>
        <dbReference type="EC" id="2.7.7.6"/>
    </reaction>
</comment>
<comment type="subunit">
    <text evidence="1">The RNAP catalytic core consists of 2 alpha, 1 beta, 1 beta' and 1 omega subunit. When a sigma factor is associated with the core the holoenzyme is formed, which can initiate transcription.</text>
</comment>
<comment type="similarity">
    <text evidence="1">Belongs to the RNA polymerase beta chain family.</text>
</comment>
<gene>
    <name evidence="1" type="primary">rpoB</name>
    <name type="ordered locus">GK0098</name>
</gene>
<name>RPOB_GEOKA</name>
<evidence type="ECO:0000255" key="1">
    <source>
        <dbReference type="HAMAP-Rule" id="MF_01321"/>
    </source>
</evidence>
<evidence type="ECO:0000256" key="2">
    <source>
        <dbReference type="SAM" id="MobiDB-lite"/>
    </source>
</evidence>